<dbReference type="EC" id="2.7.8.7" evidence="1"/>
<dbReference type="EMBL" id="AM286415">
    <property type="protein sequence ID" value="CAL11119.1"/>
    <property type="molecule type" value="Genomic_DNA"/>
</dbReference>
<dbReference type="RefSeq" id="WP_005172734.1">
    <property type="nucleotide sequence ID" value="NC_008800.1"/>
</dbReference>
<dbReference type="RefSeq" id="YP_001005354.1">
    <property type="nucleotide sequence ID" value="NC_008800.1"/>
</dbReference>
<dbReference type="SMR" id="A1JKK7"/>
<dbReference type="KEGG" id="yen:YE1021"/>
<dbReference type="PATRIC" id="fig|393305.7.peg.1117"/>
<dbReference type="eggNOG" id="COG0736">
    <property type="taxonomic scope" value="Bacteria"/>
</dbReference>
<dbReference type="HOGENOM" id="CLU_089696_3_1_6"/>
<dbReference type="OrthoDB" id="517356at2"/>
<dbReference type="Proteomes" id="UP000000642">
    <property type="component" value="Chromosome"/>
</dbReference>
<dbReference type="GO" id="GO:0005737">
    <property type="term" value="C:cytoplasm"/>
    <property type="evidence" value="ECO:0007669"/>
    <property type="project" value="UniProtKB-SubCell"/>
</dbReference>
<dbReference type="GO" id="GO:0008897">
    <property type="term" value="F:holo-[acyl-carrier-protein] synthase activity"/>
    <property type="evidence" value="ECO:0007669"/>
    <property type="project" value="UniProtKB-UniRule"/>
</dbReference>
<dbReference type="GO" id="GO:0000287">
    <property type="term" value="F:magnesium ion binding"/>
    <property type="evidence" value="ECO:0007669"/>
    <property type="project" value="UniProtKB-UniRule"/>
</dbReference>
<dbReference type="GO" id="GO:0006633">
    <property type="term" value="P:fatty acid biosynthetic process"/>
    <property type="evidence" value="ECO:0007669"/>
    <property type="project" value="UniProtKB-UniRule"/>
</dbReference>
<dbReference type="FunFam" id="3.90.470.20:FF:000001">
    <property type="entry name" value="Holo-[acyl-carrier-protein] synthase"/>
    <property type="match status" value="1"/>
</dbReference>
<dbReference type="Gene3D" id="3.90.470.20">
    <property type="entry name" value="4'-phosphopantetheinyl transferase domain"/>
    <property type="match status" value="1"/>
</dbReference>
<dbReference type="HAMAP" id="MF_00101">
    <property type="entry name" value="AcpS"/>
    <property type="match status" value="1"/>
</dbReference>
<dbReference type="InterPro" id="IPR008278">
    <property type="entry name" value="4-PPantetheinyl_Trfase_dom"/>
</dbReference>
<dbReference type="InterPro" id="IPR037143">
    <property type="entry name" value="4-PPantetheinyl_Trfase_dom_sf"/>
</dbReference>
<dbReference type="InterPro" id="IPR002582">
    <property type="entry name" value="ACPS"/>
</dbReference>
<dbReference type="InterPro" id="IPR004568">
    <property type="entry name" value="Ppantetheine-prot_Trfase_dom"/>
</dbReference>
<dbReference type="NCBIfam" id="TIGR00516">
    <property type="entry name" value="acpS"/>
    <property type="match status" value="1"/>
</dbReference>
<dbReference type="NCBIfam" id="TIGR00556">
    <property type="entry name" value="pantethn_trn"/>
    <property type="match status" value="1"/>
</dbReference>
<dbReference type="Pfam" id="PF01648">
    <property type="entry name" value="ACPS"/>
    <property type="match status" value="1"/>
</dbReference>
<dbReference type="SUPFAM" id="SSF56214">
    <property type="entry name" value="4'-phosphopantetheinyl transferase"/>
    <property type="match status" value="1"/>
</dbReference>
<sequence>MAIIGLGTDIVEISRIEAVVERSGEKLARRILSPAEWQHYQQHQQPIRFLAKRFAVKEAAAKAFGTGIRNGLAFNQFEVVNDALGKPTLRLHQRAAELAAELGVKSLHVTLADERRYACATVIIES</sequence>
<comment type="function">
    <text evidence="1">Transfers the 4'-phosphopantetheine moiety from coenzyme A to a Ser of acyl-carrier-protein.</text>
</comment>
<comment type="catalytic activity">
    <reaction evidence="1">
        <text>apo-[ACP] + CoA = holo-[ACP] + adenosine 3',5'-bisphosphate + H(+)</text>
        <dbReference type="Rhea" id="RHEA:12068"/>
        <dbReference type="Rhea" id="RHEA-COMP:9685"/>
        <dbReference type="Rhea" id="RHEA-COMP:9690"/>
        <dbReference type="ChEBI" id="CHEBI:15378"/>
        <dbReference type="ChEBI" id="CHEBI:29999"/>
        <dbReference type="ChEBI" id="CHEBI:57287"/>
        <dbReference type="ChEBI" id="CHEBI:58343"/>
        <dbReference type="ChEBI" id="CHEBI:64479"/>
        <dbReference type="EC" id="2.7.8.7"/>
    </reaction>
</comment>
<comment type="cofactor">
    <cofactor evidence="1">
        <name>Mg(2+)</name>
        <dbReference type="ChEBI" id="CHEBI:18420"/>
    </cofactor>
</comment>
<comment type="subcellular location">
    <subcellularLocation>
        <location evidence="1">Cytoplasm</location>
    </subcellularLocation>
</comment>
<comment type="similarity">
    <text evidence="1">Belongs to the P-Pant transferase superfamily. AcpS family.</text>
</comment>
<gene>
    <name evidence="1" type="primary">acpS</name>
    <name type="ordered locus">YE1021</name>
</gene>
<accession>A1JKK7</accession>
<feature type="chain" id="PRO_1000008525" description="Holo-[acyl-carrier-protein] synthase">
    <location>
        <begin position="1"/>
        <end position="126"/>
    </location>
</feature>
<feature type="binding site" evidence="1">
    <location>
        <position position="9"/>
    </location>
    <ligand>
        <name>Mg(2+)</name>
        <dbReference type="ChEBI" id="CHEBI:18420"/>
    </ligand>
</feature>
<feature type="binding site" evidence="1">
    <location>
        <position position="58"/>
    </location>
    <ligand>
        <name>Mg(2+)</name>
        <dbReference type="ChEBI" id="CHEBI:18420"/>
    </ligand>
</feature>
<organism>
    <name type="scientific">Yersinia enterocolitica serotype O:8 / biotype 1B (strain NCTC 13174 / 8081)</name>
    <dbReference type="NCBI Taxonomy" id="393305"/>
    <lineage>
        <taxon>Bacteria</taxon>
        <taxon>Pseudomonadati</taxon>
        <taxon>Pseudomonadota</taxon>
        <taxon>Gammaproteobacteria</taxon>
        <taxon>Enterobacterales</taxon>
        <taxon>Yersiniaceae</taxon>
        <taxon>Yersinia</taxon>
    </lineage>
</organism>
<protein>
    <recommendedName>
        <fullName evidence="1">Holo-[acyl-carrier-protein] synthase</fullName>
        <shortName evidence="1">Holo-ACP synthase</shortName>
        <ecNumber evidence="1">2.7.8.7</ecNumber>
    </recommendedName>
    <alternativeName>
        <fullName evidence="1">4'-phosphopantetheinyl transferase AcpS</fullName>
    </alternativeName>
</protein>
<name>ACPS_YERE8</name>
<proteinExistence type="inferred from homology"/>
<evidence type="ECO:0000255" key="1">
    <source>
        <dbReference type="HAMAP-Rule" id="MF_00101"/>
    </source>
</evidence>
<keyword id="KW-0963">Cytoplasm</keyword>
<keyword id="KW-0275">Fatty acid biosynthesis</keyword>
<keyword id="KW-0276">Fatty acid metabolism</keyword>
<keyword id="KW-0444">Lipid biosynthesis</keyword>
<keyword id="KW-0443">Lipid metabolism</keyword>
<keyword id="KW-0460">Magnesium</keyword>
<keyword id="KW-0479">Metal-binding</keyword>
<keyword id="KW-0808">Transferase</keyword>
<reference key="1">
    <citation type="journal article" date="2006" name="PLoS Genet.">
        <title>The complete genome sequence and comparative genome analysis of the high pathogenicity Yersinia enterocolitica strain 8081.</title>
        <authorList>
            <person name="Thomson N.R."/>
            <person name="Howard S."/>
            <person name="Wren B.W."/>
            <person name="Holden M.T.G."/>
            <person name="Crossman L."/>
            <person name="Challis G.L."/>
            <person name="Churcher C."/>
            <person name="Mungall K."/>
            <person name="Brooks K."/>
            <person name="Chillingworth T."/>
            <person name="Feltwell T."/>
            <person name="Abdellah Z."/>
            <person name="Hauser H."/>
            <person name="Jagels K."/>
            <person name="Maddison M."/>
            <person name="Moule S."/>
            <person name="Sanders M."/>
            <person name="Whitehead S."/>
            <person name="Quail M.A."/>
            <person name="Dougan G."/>
            <person name="Parkhill J."/>
            <person name="Prentice M.B."/>
        </authorList>
    </citation>
    <scope>NUCLEOTIDE SEQUENCE [LARGE SCALE GENOMIC DNA]</scope>
    <source>
        <strain>NCTC 13174 / 8081</strain>
    </source>
</reference>